<protein>
    <recommendedName>
        <fullName evidence="1">Tryptophan synthase alpha chain</fullName>
        <ecNumber evidence="1">4.2.1.20</ecNumber>
    </recommendedName>
</protein>
<organism>
    <name type="scientific">Escherichia fergusonii (strain ATCC 35469 / DSM 13698 / CCUG 18766 / IAM 14443 / JCM 21226 / LMG 7866 / NBRC 102419 / NCTC 12128 / CDC 0568-73)</name>
    <dbReference type="NCBI Taxonomy" id="585054"/>
    <lineage>
        <taxon>Bacteria</taxon>
        <taxon>Pseudomonadati</taxon>
        <taxon>Pseudomonadota</taxon>
        <taxon>Gammaproteobacteria</taxon>
        <taxon>Enterobacterales</taxon>
        <taxon>Enterobacteriaceae</taxon>
        <taxon>Escherichia</taxon>
    </lineage>
</organism>
<accession>B7LS20</accession>
<keyword id="KW-0028">Amino-acid biosynthesis</keyword>
<keyword id="KW-0057">Aromatic amino acid biosynthesis</keyword>
<keyword id="KW-0456">Lyase</keyword>
<keyword id="KW-0822">Tryptophan biosynthesis</keyword>
<dbReference type="EC" id="4.2.1.20" evidence="1"/>
<dbReference type="EMBL" id="CU928158">
    <property type="protein sequence ID" value="CAQ89212.1"/>
    <property type="molecule type" value="Genomic_DNA"/>
</dbReference>
<dbReference type="RefSeq" id="WP_000443105.1">
    <property type="nucleotide sequence ID" value="NC_011740.1"/>
</dbReference>
<dbReference type="SMR" id="B7LS20"/>
<dbReference type="GeneID" id="75057266"/>
<dbReference type="KEGG" id="efe:EFER_1696"/>
<dbReference type="HOGENOM" id="CLU_016734_0_4_6"/>
<dbReference type="OrthoDB" id="9804578at2"/>
<dbReference type="UniPathway" id="UPA00035">
    <property type="reaction ID" value="UER00044"/>
</dbReference>
<dbReference type="Proteomes" id="UP000000745">
    <property type="component" value="Chromosome"/>
</dbReference>
<dbReference type="GO" id="GO:0005829">
    <property type="term" value="C:cytosol"/>
    <property type="evidence" value="ECO:0007669"/>
    <property type="project" value="TreeGrafter"/>
</dbReference>
<dbReference type="GO" id="GO:0004834">
    <property type="term" value="F:tryptophan synthase activity"/>
    <property type="evidence" value="ECO:0007669"/>
    <property type="project" value="UniProtKB-UniRule"/>
</dbReference>
<dbReference type="CDD" id="cd04724">
    <property type="entry name" value="Tryptophan_synthase_alpha"/>
    <property type="match status" value="1"/>
</dbReference>
<dbReference type="FunFam" id="3.20.20.70:FF:000037">
    <property type="entry name" value="Tryptophan synthase alpha chain"/>
    <property type="match status" value="1"/>
</dbReference>
<dbReference type="Gene3D" id="3.20.20.70">
    <property type="entry name" value="Aldolase class I"/>
    <property type="match status" value="1"/>
</dbReference>
<dbReference type="HAMAP" id="MF_00131">
    <property type="entry name" value="Trp_synth_alpha"/>
    <property type="match status" value="1"/>
</dbReference>
<dbReference type="InterPro" id="IPR013785">
    <property type="entry name" value="Aldolase_TIM"/>
</dbReference>
<dbReference type="InterPro" id="IPR011060">
    <property type="entry name" value="RibuloseP-bd_barrel"/>
</dbReference>
<dbReference type="InterPro" id="IPR018204">
    <property type="entry name" value="Trp_synthase_alpha_AS"/>
</dbReference>
<dbReference type="InterPro" id="IPR002028">
    <property type="entry name" value="Trp_synthase_suA"/>
</dbReference>
<dbReference type="NCBIfam" id="TIGR00262">
    <property type="entry name" value="trpA"/>
    <property type="match status" value="1"/>
</dbReference>
<dbReference type="PANTHER" id="PTHR43406:SF1">
    <property type="entry name" value="TRYPTOPHAN SYNTHASE ALPHA CHAIN, CHLOROPLASTIC"/>
    <property type="match status" value="1"/>
</dbReference>
<dbReference type="PANTHER" id="PTHR43406">
    <property type="entry name" value="TRYPTOPHAN SYNTHASE, ALPHA CHAIN"/>
    <property type="match status" value="1"/>
</dbReference>
<dbReference type="Pfam" id="PF00290">
    <property type="entry name" value="Trp_syntA"/>
    <property type="match status" value="1"/>
</dbReference>
<dbReference type="SUPFAM" id="SSF51366">
    <property type="entry name" value="Ribulose-phoshate binding barrel"/>
    <property type="match status" value="1"/>
</dbReference>
<dbReference type="PROSITE" id="PS00167">
    <property type="entry name" value="TRP_SYNTHASE_ALPHA"/>
    <property type="match status" value="1"/>
</dbReference>
<feature type="chain" id="PRO_1000117741" description="Tryptophan synthase alpha chain">
    <location>
        <begin position="1"/>
        <end position="268"/>
    </location>
</feature>
<feature type="active site" description="Proton acceptor" evidence="1">
    <location>
        <position position="49"/>
    </location>
</feature>
<feature type="active site" description="Proton acceptor" evidence="1">
    <location>
        <position position="60"/>
    </location>
</feature>
<comment type="function">
    <text evidence="1">The alpha subunit is responsible for the aldol cleavage of indoleglycerol phosphate to indole and glyceraldehyde 3-phosphate.</text>
</comment>
<comment type="catalytic activity">
    <reaction evidence="1">
        <text>(1S,2R)-1-C-(indol-3-yl)glycerol 3-phosphate + L-serine = D-glyceraldehyde 3-phosphate + L-tryptophan + H2O</text>
        <dbReference type="Rhea" id="RHEA:10532"/>
        <dbReference type="ChEBI" id="CHEBI:15377"/>
        <dbReference type="ChEBI" id="CHEBI:33384"/>
        <dbReference type="ChEBI" id="CHEBI:57912"/>
        <dbReference type="ChEBI" id="CHEBI:58866"/>
        <dbReference type="ChEBI" id="CHEBI:59776"/>
        <dbReference type="EC" id="4.2.1.20"/>
    </reaction>
</comment>
<comment type="pathway">
    <text evidence="1">Amino-acid biosynthesis; L-tryptophan biosynthesis; L-tryptophan from chorismate: step 5/5.</text>
</comment>
<comment type="subunit">
    <text evidence="1">Tetramer of two alpha and two beta chains.</text>
</comment>
<comment type="similarity">
    <text evidence="1">Belongs to the TrpA family.</text>
</comment>
<sequence>MERYETLFARLKERKEGAFVPFVTLGDPGIEQSLKIIDALIEAGADALELGIPFSDPLADGPTIQNATLRAFAAGVTPAQCFEMLGLIRQKHPNIPIGLLMYANLVFNKGIDEFYAQCEKVGVDSVLVADVPVEESAPFRQAALRHNVAPIFICPPNADEDLLRQIASYGRGYTYLLSRAGVTGAENRAALPLNHLVAKLKEYNAAPPLQGFGISAPDQVKAAIDAGAAGAISGSAIVKIIEQHINEPEKMLAVLKAFVQPMKAATRS</sequence>
<reference key="1">
    <citation type="journal article" date="2009" name="PLoS Genet.">
        <title>Organised genome dynamics in the Escherichia coli species results in highly diverse adaptive paths.</title>
        <authorList>
            <person name="Touchon M."/>
            <person name="Hoede C."/>
            <person name="Tenaillon O."/>
            <person name="Barbe V."/>
            <person name="Baeriswyl S."/>
            <person name="Bidet P."/>
            <person name="Bingen E."/>
            <person name="Bonacorsi S."/>
            <person name="Bouchier C."/>
            <person name="Bouvet O."/>
            <person name="Calteau A."/>
            <person name="Chiapello H."/>
            <person name="Clermont O."/>
            <person name="Cruveiller S."/>
            <person name="Danchin A."/>
            <person name="Diard M."/>
            <person name="Dossat C."/>
            <person name="Karoui M.E."/>
            <person name="Frapy E."/>
            <person name="Garry L."/>
            <person name="Ghigo J.M."/>
            <person name="Gilles A.M."/>
            <person name="Johnson J."/>
            <person name="Le Bouguenec C."/>
            <person name="Lescat M."/>
            <person name="Mangenot S."/>
            <person name="Martinez-Jehanne V."/>
            <person name="Matic I."/>
            <person name="Nassif X."/>
            <person name="Oztas S."/>
            <person name="Petit M.A."/>
            <person name="Pichon C."/>
            <person name="Rouy Z."/>
            <person name="Ruf C.S."/>
            <person name="Schneider D."/>
            <person name="Tourret J."/>
            <person name="Vacherie B."/>
            <person name="Vallenet D."/>
            <person name="Medigue C."/>
            <person name="Rocha E.P.C."/>
            <person name="Denamur E."/>
        </authorList>
    </citation>
    <scope>NUCLEOTIDE SEQUENCE [LARGE SCALE GENOMIC DNA]</scope>
    <source>
        <strain>ATCC 35469 / DSM 13698 / BCRC 15582 / CCUG 18766 / IAM 14443 / JCM 21226 / LMG 7866 / NBRC 102419 / NCTC 12128 / CDC 0568-73</strain>
    </source>
</reference>
<gene>
    <name evidence="1" type="primary">trpA</name>
    <name type="ordered locus">EFER_1696</name>
</gene>
<name>TRPA_ESCF3</name>
<proteinExistence type="inferred from homology"/>
<evidence type="ECO:0000255" key="1">
    <source>
        <dbReference type="HAMAP-Rule" id="MF_00131"/>
    </source>
</evidence>